<organism>
    <name type="scientific">Rattus norvegicus</name>
    <name type="common">Rat</name>
    <dbReference type="NCBI Taxonomy" id="10116"/>
    <lineage>
        <taxon>Eukaryota</taxon>
        <taxon>Metazoa</taxon>
        <taxon>Chordata</taxon>
        <taxon>Craniata</taxon>
        <taxon>Vertebrata</taxon>
        <taxon>Euteleostomi</taxon>
        <taxon>Mammalia</taxon>
        <taxon>Eutheria</taxon>
        <taxon>Euarchontoglires</taxon>
        <taxon>Glires</taxon>
        <taxon>Rodentia</taxon>
        <taxon>Myomorpha</taxon>
        <taxon>Muroidea</taxon>
        <taxon>Muridae</taxon>
        <taxon>Murinae</taxon>
        <taxon>Rattus</taxon>
    </lineage>
</organism>
<evidence type="ECO:0000305" key="1"/>
<gene>
    <name type="primary">Fau</name>
</gene>
<accession>Q05474</accession>
<keyword id="KW-1185">Reference proteome</keyword>
<dbReference type="EMBL" id="X62671">
    <property type="protein sequence ID" value="CAA44544.1"/>
    <property type="molecule type" value="mRNA"/>
</dbReference>
<dbReference type="EMBL" id="X62671">
    <property type="protein sequence ID" value="CAA44545.1"/>
    <property type="status" value="ALT_TERM"/>
    <property type="molecule type" value="mRNA"/>
</dbReference>
<dbReference type="PIR" id="A47416">
    <property type="entry name" value="A47416"/>
</dbReference>
<dbReference type="BMRB" id="Q05474"/>
<dbReference type="SMR" id="Q05474"/>
<dbReference type="FunCoup" id="Q05474">
    <property type="interactions" value="217"/>
</dbReference>
<dbReference type="STRING" id="10116.ENSRNOP00000028481"/>
<dbReference type="jPOST" id="Q05474"/>
<dbReference type="PaxDb" id="10116-ENSRNOP00000028481"/>
<dbReference type="UCSC" id="RGD:61938">
    <property type="organism name" value="rat"/>
</dbReference>
<dbReference type="AGR" id="RGD:61938"/>
<dbReference type="RGD" id="61938">
    <property type="gene designation" value="Fau"/>
</dbReference>
<dbReference type="eggNOG" id="KOG0001">
    <property type="taxonomic scope" value="Eukaryota"/>
</dbReference>
<dbReference type="eggNOG" id="KOG0009">
    <property type="taxonomic scope" value="Eukaryota"/>
</dbReference>
<dbReference type="InParanoid" id="Q05474"/>
<dbReference type="Reactome" id="R-RNO-156827">
    <property type="pathway name" value="L13a-mediated translational silencing of Ceruloplasmin expression"/>
</dbReference>
<dbReference type="Reactome" id="R-RNO-1799339">
    <property type="pathway name" value="SRP-dependent cotranslational protein targeting to membrane"/>
</dbReference>
<dbReference type="Reactome" id="R-RNO-6791226">
    <property type="pathway name" value="Major pathway of rRNA processing in the nucleolus and cytosol"/>
</dbReference>
<dbReference type="Reactome" id="R-RNO-72649">
    <property type="pathway name" value="Translation initiation complex formation"/>
</dbReference>
<dbReference type="Reactome" id="R-RNO-72689">
    <property type="pathway name" value="Formation of a pool of free 40S subunits"/>
</dbReference>
<dbReference type="Reactome" id="R-RNO-72695">
    <property type="pathway name" value="Formation of the ternary complex, and subsequently, the 43S complex"/>
</dbReference>
<dbReference type="Reactome" id="R-RNO-72702">
    <property type="pathway name" value="Ribosomal scanning and start codon recognition"/>
</dbReference>
<dbReference type="Reactome" id="R-RNO-72706">
    <property type="pathway name" value="GTP hydrolysis and joining of the 60S ribosomal subunit"/>
</dbReference>
<dbReference type="Reactome" id="R-RNO-975956">
    <property type="pathway name" value="Nonsense Mediated Decay (NMD) independent of the Exon Junction Complex (EJC)"/>
</dbReference>
<dbReference type="Reactome" id="R-RNO-975957">
    <property type="pathway name" value="Nonsense Mediated Decay (NMD) enhanced by the Exon Junction Complex (EJC)"/>
</dbReference>
<dbReference type="Proteomes" id="UP000002494">
    <property type="component" value="Unplaced"/>
</dbReference>
<dbReference type="GO" id="GO:0005737">
    <property type="term" value="C:cytoplasm"/>
    <property type="evidence" value="ECO:0000318"/>
    <property type="project" value="GO_Central"/>
</dbReference>
<dbReference type="GO" id="GO:0022626">
    <property type="term" value="C:cytosolic ribosome"/>
    <property type="evidence" value="ECO:0000266"/>
    <property type="project" value="RGD"/>
</dbReference>
<dbReference type="GO" id="GO:0022627">
    <property type="term" value="C:cytosolic small ribosomal subunit"/>
    <property type="evidence" value="ECO:0000266"/>
    <property type="project" value="RGD"/>
</dbReference>
<dbReference type="GO" id="GO:0005615">
    <property type="term" value="C:extracellular space"/>
    <property type="evidence" value="ECO:0000266"/>
    <property type="project" value="RGD"/>
</dbReference>
<dbReference type="GO" id="GO:0005634">
    <property type="term" value="C:nucleus"/>
    <property type="evidence" value="ECO:0000318"/>
    <property type="project" value="GO_Central"/>
</dbReference>
<dbReference type="GO" id="GO:0031386">
    <property type="term" value="F:protein tag activity"/>
    <property type="evidence" value="ECO:0000318"/>
    <property type="project" value="GO_Central"/>
</dbReference>
<dbReference type="GO" id="GO:0003735">
    <property type="term" value="F:structural constituent of ribosome"/>
    <property type="evidence" value="ECO:0000266"/>
    <property type="project" value="RGD"/>
</dbReference>
<dbReference type="GO" id="GO:0031625">
    <property type="term" value="F:ubiquitin protein ligase binding"/>
    <property type="evidence" value="ECO:0000318"/>
    <property type="project" value="GO_Central"/>
</dbReference>
<dbReference type="GO" id="GO:0061844">
    <property type="term" value="P:antimicrobial humoral immune response mediated by antimicrobial peptide"/>
    <property type="evidence" value="ECO:0000266"/>
    <property type="project" value="RGD"/>
</dbReference>
<dbReference type="GO" id="GO:0050830">
    <property type="term" value="P:defense response to Gram-positive bacterium"/>
    <property type="evidence" value="ECO:0000266"/>
    <property type="project" value="RGD"/>
</dbReference>
<dbReference type="GO" id="GO:0002227">
    <property type="term" value="P:innate immune response in mucosa"/>
    <property type="evidence" value="ECO:0000266"/>
    <property type="project" value="RGD"/>
</dbReference>
<dbReference type="GO" id="GO:0019941">
    <property type="term" value="P:modification-dependent protein catabolic process"/>
    <property type="evidence" value="ECO:0000318"/>
    <property type="project" value="GO_Central"/>
</dbReference>
<dbReference type="GO" id="GO:0016567">
    <property type="term" value="P:protein ubiquitination"/>
    <property type="evidence" value="ECO:0000318"/>
    <property type="project" value="GO_Central"/>
</dbReference>
<dbReference type="CDD" id="cd01793">
    <property type="entry name" value="Ubl_FUBI"/>
    <property type="match status" value="1"/>
</dbReference>
<dbReference type="FunFam" id="3.10.20.90:FF:000114">
    <property type="entry name" value="40S ribosomal protein S30"/>
    <property type="match status" value="1"/>
</dbReference>
<dbReference type="Gene3D" id="3.10.20.90">
    <property type="entry name" value="Phosphatidylinositol 3-kinase Catalytic Subunit, Chain A, domain 1"/>
    <property type="match status" value="1"/>
</dbReference>
<dbReference type="InterPro" id="IPR039415">
    <property type="entry name" value="FUBI"/>
</dbReference>
<dbReference type="InterPro" id="IPR000626">
    <property type="entry name" value="Ubiquitin-like_dom"/>
</dbReference>
<dbReference type="InterPro" id="IPR029071">
    <property type="entry name" value="Ubiquitin-like_domsf"/>
</dbReference>
<dbReference type="InterPro" id="IPR019954">
    <property type="entry name" value="Ubiquitin_CS"/>
</dbReference>
<dbReference type="InterPro" id="IPR019956">
    <property type="entry name" value="Ubiquitin_dom"/>
</dbReference>
<dbReference type="Pfam" id="PF00240">
    <property type="entry name" value="ubiquitin"/>
    <property type="match status" value="1"/>
</dbReference>
<dbReference type="PRINTS" id="PR00348">
    <property type="entry name" value="UBIQUITIN"/>
</dbReference>
<dbReference type="SMART" id="SM00213">
    <property type="entry name" value="UBQ"/>
    <property type="match status" value="1"/>
</dbReference>
<dbReference type="SUPFAM" id="SSF54236">
    <property type="entry name" value="Ubiquitin-like"/>
    <property type="match status" value="1"/>
</dbReference>
<dbReference type="PROSITE" id="PS00299">
    <property type="entry name" value="UBIQUITIN_1"/>
    <property type="match status" value="1"/>
</dbReference>
<dbReference type="PROSITE" id="PS50053">
    <property type="entry name" value="UBIQUITIN_2"/>
    <property type="match status" value="1"/>
</dbReference>
<sequence>MQLFVRAQELHTLEVTGQETVAQIKAHVASLEGIAPEDQVVLLAGSPLEDEATLGQCGVEALTTLEVAGRMLGG</sequence>
<name>UBIM_RAT</name>
<protein>
    <recommendedName>
        <fullName>Ubiquitin-like protein FUBI</fullName>
    </recommendedName>
</protein>
<reference key="1">
    <citation type="journal article" date="1993" name="J. Biol. Chem.">
        <title>The carboxyl extension of a ubiquitin-like protein is rat ribosomal protein S30.</title>
        <authorList>
            <person name="Olvera J."/>
            <person name="Wool I.G."/>
        </authorList>
    </citation>
    <scope>NUCLEOTIDE SEQUENCE [MRNA]</scope>
    <source>
        <strain>Sprague-Dawley</strain>
    </source>
</reference>
<feature type="chain" id="PRO_0000114886" description="Ubiquitin-like protein FUBI">
    <location>
        <begin position="1"/>
        <end position="74"/>
    </location>
</feature>
<proteinExistence type="inferred from homology"/>
<comment type="miscellaneous">
    <text>This protein is synthesized with ribosomal S30 as its C-terminal extension.</text>
</comment>
<comment type="similarity">
    <text evidence="1">Belongs to the ubiquitin family.</text>
</comment>